<gene>
    <name evidence="1" type="primary">tsf</name>
    <name type="ordered locus">E2348C_0175</name>
</gene>
<feature type="chain" id="PRO_1000117578" description="Elongation factor Ts">
    <location>
        <begin position="1"/>
        <end position="283"/>
    </location>
</feature>
<feature type="region of interest" description="Involved in Mg(2+) ion dislocation from EF-Tu" evidence="1">
    <location>
        <begin position="80"/>
        <end position="83"/>
    </location>
</feature>
<comment type="function">
    <text evidence="1">Associates with the EF-Tu.GDP complex and induces the exchange of GDP to GTP. It remains bound to the aminoacyl-tRNA.EF-Tu.GTP complex up to the GTP hydrolysis stage on the ribosome.</text>
</comment>
<comment type="subcellular location">
    <subcellularLocation>
        <location evidence="1">Cytoplasm</location>
    </subcellularLocation>
</comment>
<comment type="similarity">
    <text evidence="1">Belongs to the EF-Ts family.</text>
</comment>
<keyword id="KW-0963">Cytoplasm</keyword>
<keyword id="KW-0251">Elongation factor</keyword>
<keyword id="KW-0648">Protein biosynthesis</keyword>
<keyword id="KW-1185">Reference proteome</keyword>
<dbReference type="EMBL" id="FM180568">
    <property type="protein sequence ID" value="CAS07723.1"/>
    <property type="molecule type" value="Genomic_DNA"/>
</dbReference>
<dbReference type="RefSeq" id="WP_000818114.1">
    <property type="nucleotide sequence ID" value="NC_011601.1"/>
</dbReference>
<dbReference type="SMR" id="B7UIL5"/>
<dbReference type="GeneID" id="93777255"/>
<dbReference type="KEGG" id="ecg:E2348C_0175"/>
<dbReference type="HOGENOM" id="CLU_047155_0_2_6"/>
<dbReference type="Proteomes" id="UP000008205">
    <property type="component" value="Chromosome"/>
</dbReference>
<dbReference type="GO" id="GO:0005737">
    <property type="term" value="C:cytoplasm"/>
    <property type="evidence" value="ECO:0007669"/>
    <property type="project" value="UniProtKB-SubCell"/>
</dbReference>
<dbReference type="GO" id="GO:0003746">
    <property type="term" value="F:translation elongation factor activity"/>
    <property type="evidence" value="ECO:0007669"/>
    <property type="project" value="UniProtKB-UniRule"/>
</dbReference>
<dbReference type="CDD" id="cd14275">
    <property type="entry name" value="UBA_EF-Ts"/>
    <property type="match status" value="1"/>
</dbReference>
<dbReference type="FunFam" id="1.10.286.20:FF:000001">
    <property type="entry name" value="Elongation factor Ts"/>
    <property type="match status" value="1"/>
</dbReference>
<dbReference type="FunFam" id="1.10.8.10:FF:000001">
    <property type="entry name" value="Elongation factor Ts"/>
    <property type="match status" value="1"/>
</dbReference>
<dbReference type="FunFam" id="3.30.479.20:FF:000001">
    <property type="entry name" value="Elongation factor Ts"/>
    <property type="match status" value="1"/>
</dbReference>
<dbReference type="Gene3D" id="1.10.286.20">
    <property type="match status" value="1"/>
</dbReference>
<dbReference type="Gene3D" id="1.10.8.10">
    <property type="entry name" value="DNA helicase RuvA subunit, C-terminal domain"/>
    <property type="match status" value="1"/>
</dbReference>
<dbReference type="Gene3D" id="3.30.479.20">
    <property type="entry name" value="Elongation factor Ts, dimerisation domain"/>
    <property type="match status" value="2"/>
</dbReference>
<dbReference type="HAMAP" id="MF_00050">
    <property type="entry name" value="EF_Ts"/>
    <property type="match status" value="1"/>
</dbReference>
<dbReference type="InterPro" id="IPR036402">
    <property type="entry name" value="EF-Ts_dimer_sf"/>
</dbReference>
<dbReference type="InterPro" id="IPR001816">
    <property type="entry name" value="Transl_elong_EFTs/EF1B"/>
</dbReference>
<dbReference type="InterPro" id="IPR014039">
    <property type="entry name" value="Transl_elong_EFTs/EF1B_dimer"/>
</dbReference>
<dbReference type="InterPro" id="IPR018101">
    <property type="entry name" value="Transl_elong_Ts_CS"/>
</dbReference>
<dbReference type="InterPro" id="IPR009060">
    <property type="entry name" value="UBA-like_sf"/>
</dbReference>
<dbReference type="NCBIfam" id="TIGR00116">
    <property type="entry name" value="tsf"/>
    <property type="match status" value="1"/>
</dbReference>
<dbReference type="PANTHER" id="PTHR11741">
    <property type="entry name" value="ELONGATION FACTOR TS"/>
    <property type="match status" value="1"/>
</dbReference>
<dbReference type="PANTHER" id="PTHR11741:SF0">
    <property type="entry name" value="ELONGATION FACTOR TS, MITOCHONDRIAL"/>
    <property type="match status" value="1"/>
</dbReference>
<dbReference type="Pfam" id="PF00889">
    <property type="entry name" value="EF_TS"/>
    <property type="match status" value="1"/>
</dbReference>
<dbReference type="SUPFAM" id="SSF54713">
    <property type="entry name" value="Elongation factor Ts (EF-Ts), dimerisation domain"/>
    <property type="match status" value="2"/>
</dbReference>
<dbReference type="SUPFAM" id="SSF46934">
    <property type="entry name" value="UBA-like"/>
    <property type="match status" value="1"/>
</dbReference>
<dbReference type="PROSITE" id="PS01126">
    <property type="entry name" value="EF_TS_1"/>
    <property type="match status" value="1"/>
</dbReference>
<dbReference type="PROSITE" id="PS01127">
    <property type="entry name" value="EF_TS_2"/>
    <property type="match status" value="1"/>
</dbReference>
<evidence type="ECO:0000255" key="1">
    <source>
        <dbReference type="HAMAP-Rule" id="MF_00050"/>
    </source>
</evidence>
<reference key="1">
    <citation type="journal article" date="2009" name="J. Bacteriol.">
        <title>Complete genome sequence and comparative genome analysis of enteropathogenic Escherichia coli O127:H6 strain E2348/69.</title>
        <authorList>
            <person name="Iguchi A."/>
            <person name="Thomson N.R."/>
            <person name="Ogura Y."/>
            <person name="Saunders D."/>
            <person name="Ooka T."/>
            <person name="Henderson I.R."/>
            <person name="Harris D."/>
            <person name="Asadulghani M."/>
            <person name="Kurokawa K."/>
            <person name="Dean P."/>
            <person name="Kenny B."/>
            <person name="Quail M.A."/>
            <person name="Thurston S."/>
            <person name="Dougan G."/>
            <person name="Hayashi T."/>
            <person name="Parkhill J."/>
            <person name="Frankel G."/>
        </authorList>
    </citation>
    <scope>NUCLEOTIDE SEQUENCE [LARGE SCALE GENOMIC DNA]</scope>
    <source>
        <strain>E2348/69 / EPEC</strain>
    </source>
</reference>
<organism>
    <name type="scientific">Escherichia coli O127:H6 (strain E2348/69 / EPEC)</name>
    <dbReference type="NCBI Taxonomy" id="574521"/>
    <lineage>
        <taxon>Bacteria</taxon>
        <taxon>Pseudomonadati</taxon>
        <taxon>Pseudomonadota</taxon>
        <taxon>Gammaproteobacteria</taxon>
        <taxon>Enterobacterales</taxon>
        <taxon>Enterobacteriaceae</taxon>
        <taxon>Escherichia</taxon>
    </lineage>
</organism>
<accession>B7UIL5</accession>
<sequence>MAEITASLVKELRERTGAGMMDCKKALTEANGDIELAIENMRKSGAIKAAKKAGNVAADGVIKTKIDGNYGIILEVNCQTDFVAKDAGFQAFADKVLDAAVAGKITDVEVLKAQFEEERVALVAKIGENINIRRVAALEGDVLGSYQHGARIGVLVAAKGADEELVKHIAMHVAASKPEFIKPEDVSAEVVEKEYQVQLDIAMQSGKPKEIAEKMVEGRMKKFTGEVSLTGQPFVMEPSKTVGQLLKEHNAEVTGFIRFEVGEGIEKVETDFAAEVAAMSKQS</sequence>
<name>EFTS_ECO27</name>
<protein>
    <recommendedName>
        <fullName evidence="1">Elongation factor Ts</fullName>
        <shortName evidence="1">EF-Ts</shortName>
    </recommendedName>
</protein>
<proteinExistence type="inferred from homology"/>